<organism>
    <name type="scientific">Candida albicans (strain SC5314 / ATCC MYA-2876)</name>
    <name type="common">Yeast</name>
    <dbReference type="NCBI Taxonomy" id="237561"/>
    <lineage>
        <taxon>Eukaryota</taxon>
        <taxon>Fungi</taxon>
        <taxon>Dikarya</taxon>
        <taxon>Ascomycota</taxon>
        <taxon>Saccharomycotina</taxon>
        <taxon>Pichiomycetes</taxon>
        <taxon>Debaryomycetaceae</taxon>
        <taxon>Candida/Lodderomyces clade</taxon>
        <taxon>Candida</taxon>
    </lineage>
</organism>
<gene>
    <name evidence="1" type="primary">ADI1</name>
    <name type="ordered locus">CAALFM_C111100WA</name>
    <name type="ORF">CaO19.2306</name>
    <name type="ORF">CaO19.9842</name>
</gene>
<accession>Q59WJ5</accession>
<accession>A0A1D8PF13</accession>
<dbReference type="EC" id="1.13.11.54" evidence="1"/>
<dbReference type="EC" id="1.13.11.53" evidence="1"/>
<dbReference type="EMBL" id="CP017623">
    <property type="protein sequence ID" value="AOW26736.1"/>
    <property type="molecule type" value="Genomic_DNA"/>
</dbReference>
<dbReference type="RefSeq" id="XP_713911.1">
    <property type="nucleotide sequence ID" value="XM_708818.1"/>
</dbReference>
<dbReference type="SMR" id="Q59WJ5"/>
<dbReference type="FunCoup" id="Q59WJ5">
    <property type="interactions" value="293"/>
</dbReference>
<dbReference type="STRING" id="237561.Q59WJ5"/>
<dbReference type="EnsemblFungi" id="C1_11100W_A-T">
    <property type="protein sequence ID" value="C1_11100W_A-T-p1"/>
    <property type="gene ID" value="C1_11100W_A"/>
</dbReference>
<dbReference type="GeneID" id="3644414"/>
<dbReference type="KEGG" id="cal:CAALFM_C111100WA"/>
<dbReference type="CGD" id="CAL0000199544">
    <property type="gene designation" value="orf19.9842"/>
</dbReference>
<dbReference type="VEuPathDB" id="FungiDB:C1_11100W_A"/>
<dbReference type="eggNOG" id="KOG2107">
    <property type="taxonomic scope" value="Eukaryota"/>
</dbReference>
<dbReference type="HOGENOM" id="CLU_090154_1_1_1"/>
<dbReference type="InParanoid" id="Q59WJ5"/>
<dbReference type="OMA" id="NNYIKLM"/>
<dbReference type="OrthoDB" id="1867259at2759"/>
<dbReference type="UniPathway" id="UPA00904">
    <property type="reaction ID" value="UER00878"/>
</dbReference>
<dbReference type="PRO" id="PR:Q59WJ5"/>
<dbReference type="Proteomes" id="UP000000559">
    <property type="component" value="Chromosome 1"/>
</dbReference>
<dbReference type="GO" id="GO:0005737">
    <property type="term" value="C:cytoplasm"/>
    <property type="evidence" value="ECO:0007669"/>
    <property type="project" value="UniProtKB-SubCell"/>
</dbReference>
<dbReference type="GO" id="GO:0005634">
    <property type="term" value="C:nucleus"/>
    <property type="evidence" value="ECO:0007669"/>
    <property type="project" value="UniProtKB-SubCell"/>
</dbReference>
<dbReference type="GO" id="GO:0010308">
    <property type="term" value="F:acireductone dioxygenase (Ni2+-requiring) activity"/>
    <property type="evidence" value="ECO:0007669"/>
    <property type="project" value="UniProtKB-UniRule"/>
</dbReference>
<dbReference type="GO" id="GO:0010309">
    <property type="term" value="F:acireductone dioxygenase [iron(II)-requiring] activity"/>
    <property type="evidence" value="ECO:0000318"/>
    <property type="project" value="GO_Central"/>
</dbReference>
<dbReference type="GO" id="GO:0005506">
    <property type="term" value="F:iron ion binding"/>
    <property type="evidence" value="ECO:0007669"/>
    <property type="project" value="UniProtKB-UniRule"/>
</dbReference>
<dbReference type="GO" id="GO:0016151">
    <property type="term" value="F:nickel cation binding"/>
    <property type="evidence" value="ECO:0007669"/>
    <property type="project" value="UniProtKB-UniRule"/>
</dbReference>
<dbReference type="GO" id="GO:0019509">
    <property type="term" value="P:L-methionine salvage from methylthioadenosine"/>
    <property type="evidence" value="ECO:0007669"/>
    <property type="project" value="UniProtKB-UniRule"/>
</dbReference>
<dbReference type="GO" id="GO:0006555">
    <property type="term" value="P:methionine metabolic process"/>
    <property type="evidence" value="ECO:0000318"/>
    <property type="project" value="GO_Central"/>
</dbReference>
<dbReference type="CDD" id="cd02232">
    <property type="entry name" value="cupin_ARD"/>
    <property type="match status" value="1"/>
</dbReference>
<dbReference type="FunFam" id="2.60.120.10:FF:000099">
    <property type="entry name" value="1,2-dihydroxy-3-keto-5-methylthiopentene dioxygenase"/>
    <property type="match status" value="1"/>
</dbReference>
<dbReference type="Gene3D" id="2.60.120.10">
    <property type="entry name" value="Jelly Rolls"/>
    <property type="match status" value="1"/>
</dbReference>
<dbReference type="HAMAP" id="MF_03154">
    <property type="entry name" value="Salvage_MtnD_euk"/>
    <property type="match status" value="1"/>
</dbReference>
<dbReference type="InterPro" id="IPR004313">
    <property type="entry name" value="ARD"/>
</dbReference>
<dbReference type="InterPro" id="IPR027496">
    <property type="entry name" value="ARD_euk"/>
</dbReference>
<dbReference type="InterPro" id="IPR014710">
    <property type="entry name" value="RmlC-like_jellyroll"/>
</dbReference>
<dbReference type="InterPro" id="IPR011051">
    <property type="entry name" value="RmlC_Cupin_sf"/>
</dbReference>
<dbReference type="PANTHER" id="PTHR23418">
    <property type="entry name" value="ACIREDUCTONE DIOXYGENASE"/>
    <property type="match status" value="1"/>
</dbReference>
<dbReference type="PANTHER" id="PTHR23418:SF0">
    <property type="entry name" value="ACIREDUCTONE DIOXYGENASE"/>
    <property type="match status" value="1"/>
</dbReference>
<dbReference type="Pfam" id="PF03079">
    <property type="entry name" value="ARD"/>
    <property type="match status" value="1"/>
</dbReference>
<dbReference type="SUPFAM" id="SSF51182">
    <property type="entry name" value="RmlC-like cupins"/>
    <property type="match status" value="1"/>
</dbReference>
<sequence>MVEFYFHDNKDTLENFTEDHNSGEPVSFDQLAEIGVIYKYITTQEELDALATEREYKNRDVVTLNLPAFNNDIDAYNAKMQQFYKEHYHEDEEIRYIAEGEGYFDVRDKQDRWIRAKLSPYDLLILPAGIYHRFTLTNAAKHVKAVRLFKDEPKWEAINRDTGKNTEARELYAKTIAV</sequence>
<comment type="function">
    <text evidence="1">Catalyzes 2 different reactions between oxygen and the acireductone 1,2-dihydroxy-3-keto-5-methylthiopentene (DHK-MTPene) depending upon the metal bound in the active site. Fe-containing acireductone dioxygenase (Fe-ARD) produces formate and 2-keto-4-methylthiobutyrate (KMTB), the alpha-ketoacid precursor of methionine in the methionine recycle pathway. Ni-containing acireductone dioxygenase (Ni-ARD) produces methylthiopropionate, carbon monoxide and formate, and does not lie on the methionine recycle pathway.</text>
</comment>
<comment type="catalytic activity">
    <reaction evidence="1">
        <text>1,2-dihydroxy-5-(methylsulfanyl)pent-1-en-3-one + O2 = 4-methylsulfanyl-2-oxobutanoate + formate + 2 H(+)</text>
        <dbReference type="Rhea" id="RHEA:24504"/>
        <dbReference type="ChEBI" id="CHEBI:15378"/>
        <dbReference type="ChEBI" id="CHEBI:15379"/>
        <dbReference type="ChEBI" id="CHEBI:15740"/>
        <dbReference type="ChEBI" id="CHEBI:16723"/>
        <dbReference type="ChEBI" id="CHEBI:49252"/>
        <dbReference type="EC" id="1.13.11.54"/>
    </reaction>
</comment>
<comment type="catalytic activity">
    <reaction evidence="1">
        <text>1,2-dihydroxy-5-(methylsulfanyl)pent-1-en-3-one + O2 = 3-(methylsulfanyl)propanoate + CO + formate + 2 H(+)</text>
        <dbReference type="Rhea" id="RHEA:14161"/>
        <dbReference type="ChEBI" id="CHEBI:15378"/>
        <dbReference type="ChEBI" id="CHEBI:15379"/>
        <dbReference type="ChEBI" id="CHEBI:15740"/>
        <dbReference type="ChEBI" id="CHEBI:17245"/>
        <dbReference type="ChEBI" id="CHEBI:49016"/>
        <dbReference type="ChEBI" id="CHEBI:49252"/>
        <dbReference type="EC" id="1.13.11.53"/>
    </reaction>
</comment>
<comment type="cofactor">
    <cofactor evidence="1">
        <name>Fe(2+)</name>
        <dbReference type="ChEBI" id="CHEBI:29033"/>
    </cofactor>
    <cofactor evidence="1">
        <name>Ni(2+)</name>
        <dbReference type="ChEBI" id="CHEBI:49786"/>
    </cofactor>
    <text evidence="1">Binds either 1 Fe or Ni cation per monomer. Iron-binding promotes an acireductone dioxygenase reaction producing 2-keto-4-methylthiobutyrate, while nickel-binding promotes an acireductone dioxygenase reaction producing 3-(methylsulfanyl)propanoate.</text>
</comment>
<comment type="pathway">
    <text evidence="1">Amino-acid biosynthesis; L-methionine biosynthesis via salvage pathway; L-methionine from S-methyl-5-thio-alpha-D-ribose 1-phosphate: step 5/6.</text>
</comment>
<comment type="subcellular location">
    <subcellularLocation>
        <location evidence="1">Cytoplasm</location>
    </subcellularLocation>
    <subcellularLocation>
        <location evidence="1">Nucleus</location>
    </subcellularLocation>
</comment>
<comment type="similarity">
    <text evidence="1">Belongs to the acireductone dioxygenase (ARD) family.</text>
</comment>
<reference key="1">
    <citation type="journal article" date="2004" name="Proc. Natl. Acad. Sci. U.S.A.">
        <title>The diploid genome sequence of Candida albicans.</title>
        <authorList>
            <person name="Jones T."/>
            <person name="Federspiel N.A."/>
            <person name="Chibana H."/>
            <person name="Dungan J."/>
            <person name="Kalman S."/>
            <person name="Magee B.B."/>
            <person name="Newport G."/>
            <person name="Thorstenson Y.R."/>
            <person name="Agabian N."/>
            <person name="Magee P.T."/>
            <person name="Davis R.W."/>
            <person name="Scherer S."/>
        </authorList>
    </citation>
    <scope>NUCLEOTIDE SEQUENCE [LARGE SCALE GENOMIC DNA]</scope>
    <source>
        <strain>SC5314 / ATCC MYA-2876</strain>
    </source>
</reference>
<reference key="2">
    <citation type="journal article" date="2007" name="Genome Biol.">
        <title>Assembly of the Candida albicans genome into sixteen supercontigs aligned on the eight chromosomes.</title>
        <authorList>
            <person name="van het Hoog M."/>
            <person name="Rast T.J."/>
            <person name="Martchenko M."/>
            <person name="Grindle S."/>
            <person name="Dignard D."/>
            <person name="Hogues H."/>
            <person name="Cuomo C."/>
            <person name="Berriman M."/>
            <person name="Scherer S."/>
            <person name="Magee B.B."/>
            <person name="Whiteway M."/>
            <person name="Chibana H."/>
            <person name="Nantel A."/>
            <person name="Magee P.T."/>
        </authorList>
    </citation>
    <scope>GENOME REANNOTATION</scope>
    <source>
        <strain>SC5314 / ATCC MYA-2876</strain>
    </source>
</reference>
<reference key="3">
    <citation type="journal article" date="2013" name="Genome Biol.">
        <title>Assembly of a phased diploid Candida albicans genome facilitates allele-specific measurements and provides a simple model for repeat and indel structure.</title>
        <authorList>
            <person name="Muzzey D."/>
            <person name="Schwartz K."/>
            <person name="Weissman J.S."/>
            <person name="Sherlock G."/>
        </authorList>
    </citation>
    <scope>NUCLEOTIDE SEQUENCE [LARGE SCALE GENOMIC DNA]</scope>
    <scope>GENOME REANNOTATION</scope>
    <source>
        <strain>SC5314 / ATCC MYA-2876</strain>
    </source>
</reference>
<proteinExistence type="inferred from homology"/>
<name>MTND_CANAL</name>
<keyword id="KW-0028">Amino-acid biosynthesis</keyword>
<keyword id="KW-0963">Cytoplasm</keyword>
<keyword id="KW-0223">Dioxygenase</keyword>
<keyword id="KW-0408">Iron</keyword>
<keyword id="KW-0479">Metal-binding</keyword>
<keyword id="KW-0486">Methionine biosynthesis</keyword>
<keyword id="KW-0533">Nickel</keyword>
<keyword id="KW-0539">Nucleus</keyword>
<keyword id="KW-0560">Oxidoreductase</keyword>
<keyword id="KW-1185">Reference proteome</keyword>
<feature type="chain" id="PRO_0000414353" description="Acireductone dioxygenase">
    <location>
        <begin position="1"/>
        <end position="178"/>
    </location>
</feature>
<feature type="binding site" evidence="1">
    <location>
        <position position="87"/>
    </location>
    <ligand>
        <name>Fe(2+)</name>
        <dbReference type="ChEBI" id="CHEBI:29033"/>
        <note>for iron-dependent acireductone dioxygenase activity</note>
    </ligand>
</feature>
<feature type="binding site" evidence="1">
    <location>
        <position position="87"/>
    </location>
    <ligand>
        <name>Ni(2+)</name>
        <dbReference type="ChEBI" id="CHEBI:49786"/>
        <note>for nickel-dependent acireductone dioxygenase activity</note>
    </ligand>
</feature>
<feature type="binding site" evidence="1">
    <location>
        <position position="89"/>
    </location>
    <ligand>
        <name>Fe(2+)</name>
        <dbReference type="ChEBI" id="CHEBI:29033"/>
        <note>for iron-dependent acireductone dioxygenase activity</note>
    </ligand>
</feature>
<feature type="binding site" evidence="1">
    <location>
        <position position="89"/>
    </location>
    <ligand>
        <name>Ni(2+)</name>
        <dbReference type="ChEBI" id="CHEBI:49786"/>
        <note>for nickel-dependent acireductone dioxygenase activity</note>
    </ligand>
</feature>
<feature type="binding site" evidence="1">
    <location>
        <position position="93"/>
    </location>
    <ligand>
        <name>Fe(2+)</name>
        <dbReference type="ChEBI" id="CHEBI:29033"/>
        <note>for iron-dependent acireductone dioxygenase activity</note>
    </ligand>
</feature>
<feature type="binding site" evidence="1">
    <location>
        <position position="93"/>
    </location>
    <ligand>
        <name>Ni(2+)</name>
        <dbReference type="ChEBI" id="CHEBI:49786"/>
        <note>for nickel-dependent acireductone dioxygenase activity</note>
    </ligand>
</feature>
<feature type="binding site" evidence="1">
    <location>
        <position position="132"/>
    </location>
    <ligand>
        <name>Fe(2+)</name>
        <dbReference type="ChEBI" id="CHEBI:29033"/>
        <note>for iron-dependent acireductone dioxygenase activity</note>
    </ligand>
</feature>
<feature type="binding site" evidence="1">
    <location>
        <position position="132"/>
    </location>
    <ligand>
        <name>Ni(2+)</name>
        <dbReference type="ChEBI" id="CHEBI:49786"/>
        <note>for nickel-dependent acireductone dioxygenase activity</note>
    </ligand>
</feature>
<protein>
    <recommendedName>
        <fullName evidence="1">Acireductone dioxygenase</fullName>
    </recommendedName>
    <alternativeName>
        <fullName evidence="1">Acireductone dioxygenase (Fe(2+)-requiring)</fullName>
        <shortName evidence="1">ARD'</shortName>
        <shortName evidence="1">Fe-ARD</shortName>
        <ecNumber evidence="1">1.13.11.54</ecNumber>
    </alternativeName>
    <alternativeName>
        <fullName evidence="1">Acireductone dioxygenase (Ni(2+)-requiring)</fullName>
        <shortName evidence="1">ARD</shortName>
        <shortName evidence="1">Ni-ARD</shortName>
        <ecNumber evidence="1">1.13.11.53</ecNumber>
    </alternativeName>
</protein>
<evidence type="ECO:0000255" key="1">
    <source>
        <dbReference type="HAMAP-Rule" id="MF_03154"/>
    </source>
</evidence>